<proteinExistence type="predicted"/>
<keyword id="KW-1185">Reference proteome</keyword>
<protein>
    <recommendedName>
        <fullName>Uncharacterized 8.2 kDa protein in LEF8-FP intergenic region</fullName>
    </recommendedName>
</protein>
<accession>P41459</accession>
<organism>
    <name type="scientific">Autographa californica nuclear polyhedrosis virus</name>
    <name type="common">AcMNPV</name>
    <dbReference type="NCBI Taxonomy" id="46015"/>
    <lineage>
        <taxon>Viruses</taxon>
        <taxon>Viruses incertae sedis</taxon>
        <taxon>Naldaviricetes</taxon>
        <taxon>Lefavirales</taxon>
        <taxon>Baculoviridae</taxon>
        <taxon>Alphabaculovirus</taxon>
        <taxon>Alphabaculovirus aucalifornicae</taxon>
    </lineage>
</organism>
<feature type="chain" id="PRO_0000132989" description="Uncharacterized 8.2 kDa protein in LEF8-FP intergenic region">
    <location>
        <begin position="1"/>
        <end position="73"/>
    </location>
</feature>
<dbReference type="EMBL" id="L22858">
    <property type="protein sequence ID" value="AAA66685.1"/>
    <property type="molecule type" value="Genomic_DNA"/>
</dbReference>
<dbReference type="PIR" id="H72856">
    <property type="entry name" value="H72856"/>
</dbReference>
<dbReference type="RefSeq" id="NP_054085.1">
    <property type="nucleotide sequence ID" value="NC_001623.1"/>
</dbReference>
<dbReference type="GeneID" id="1403888"/>
<dbReference type="KEGG" id="vg:1403888"/>
<dbReference type="OrthoDB" id="27447at10239"/>
<dbReference type="Proteomes" id="UP000008292">
    <property type="component" value="Segment"/>
</dbReference>
<dbReference type="InterPro" id="IPR035162">
    <property type="entry name" value="DUF5470"/>
</dbReference>
<dbReference type="Pfam" id="PF17564">
    <property type="entry name" value="DUF5470"/>
    <property type="match status" value="1"/>
</dbReference>
<name>Y055_NPVAC</name>
<organismHost>
    <name type="scientific">Lepidoptera</name>
    <name type="common">butterflies and moths</name>
    <dbReference type="NCBI Taxonomy" id="7088"/>
</organismHost>
<sequence>MKKVALGKIIENTVESKYKSNSVSSSLSTGASAKLSLSEYYKTFEANKVGQHTTYDVVGKRDYTKFDKLVKKY</sequence>
<reference key="1">
    <citation type="journal article" date="1994" name="Virology">
        <title>The complete DNA sequence of Autographa californica nuclear polyhedrosis virus.</title>
        <authorList>
            <person name="Ayres M.D."/>
            <person name="Howard S.C."/>
            <person name="Kuzio J."/>
            <person name="Lopez-Ferber M."/>
            <person name="Possee R.D."/>
        </authorList>
    </citation>
    <scope>NUCLEOTIDE SEQUENCE [LARGE SCALE GENOMIC DNA]</scope>
    <source>
        <strain>C6</strain>
    </source>
</reference>